<organism>
    <name type="scientific">Actinobacillus pleuropneumoniae serotype 3 (strain JL03)</name>
    <dbReference type="NCBI Taxonomy" id="434271"/>
    <lineage>
        <taxon>Bacteria</taxon>
        <taxon>Pseudomonadati</taxon>
        <taxon>Pseudomonadota</taxon>
        <taxon>Gammaproteobacteria</taxon>
        <taxon>Pasteurellales</taxon>
        <taxon>Pasteurellaceae</taxon>
        <taxon>Actinobacillus</taxon>
    </lineage>
</organism>
<accession>B0BRD1</accession>
<reference key="1">
    <citation type="journal article" date="2008" name="PLoS ONE">
        <title>Genome biology of Actinobacillus pleuropneumoniae JL03, an isolate of serotype 3 prevalent in China.</title>
        <authorList>
            <person name="Xu Z."/>
            <person name="Zhou Y."/>
            <person name="Li L."/>
            <person name="Zhou R."/>
            <person name="Xiao S."/>
            <person name="Wan Y."/>
            <person name="Zhang S."/>
            <person name="Wang K."/>
            <person name="Li W."/>
            <person name="Li L."/>
            <person name="Jin H."/>
            <person name="Kang M."/>
            <person name="Dalai B."/>
            <person name="Li T."/>
            <person name="Liu L."/>
            <person name="Cheng Y."/>
            <person name="Zhang L."/>
            <person name="Xu T."/>
            <person name="Zheng H."/>
            <person name="Pu S."/>
            <person name="Wang B."/>
            <person name="Gu W."/>
            <person name="Zhang X.L."/>
            <person name="Zhu G.-F."/>
            <person name="Wang S."/>
            <person name="Zhao G.-P."/>
            <person name="Chen H."/>
        </authorList>
    </citation>
    <scope>NUCLEOTIDE SEQUENCE [LARGE SCALE GENOMIC DNA]</scope>
    <source>
        <strain>JL03</strain>
    </source>
</reference>
<name>PRMA_ACTPJ</name>
<feature type="chain" id="PRO_1000192568" description="Ribosomal protein L11 methyltransferase">
    <location>
        <begin position="1"/>
        <end position="293"/>
    </location>
</feature>
<feature type="binding site" evidence="1">
    <location>
        <position position="145"/>
    </location>
    <ligand>
        <name>S-adenosyl-L-methionine</name>
        <dbReference type="ChEBI" id="CHEBI:59789"/>
    </ligand>
</feature>
<feature type="binding site" evidence="1">
    <location>
        <position position="166"/>
    </location>
    <ligand>
        <name>S-adenosyl-L-methionine</name>
        <dbReference type="ChEBI" id="CHEBI:59789"/>
    </ligand>
</feature>
<feature type="binding site" evidence="1">
    <location>
        <position position="188"/>
    </location>
    <ligand>
        <name>S-adenosyl-L-methionine</name>
        <dbReference type="ChEBI" id="CHEBI:59789"/>
    </ligand>
</feature>
<feature type="binding site" evidence="1">
    <location>
        <position position="230"/>
    </location>
    <ligand>
        <name>S-adenosyl-L-methionine</name>
        <dbReference type="ChEBI" id="CHEBI:59789"/>
    </ligand>
</feature>
<keyword id="KW-0963">Cytoplasm</keyword>
<keyword id="KW-0489">Methyltransferase</keyword>
<keyword id="KW-0949">S-adenosyl-L-methionine</keyword>
<keyword id="KW-0808">Transferase</keyword>
<gene>
    <name evidence="1" type="primary">prmA</name>
    <name type="ordered locus">APJL_1564</name>
</gene>
<dbReference type="EC" id="2.1.1.-" evidence="1"/>
<dbReference type="EMBL" id="CP000687">
    <property type="protein sequence ID" value="ABY70116.1"/>
    <property type="molecule type" value="Genomic_DNA"/>
</dbReference>
<dbReference type="RefSeq" id="WP_012263274.1">
    <property type="nucleotide sequence ID" value="NC_010278.1"/>
</dbReference>
<dbReference type="SMR" id="B0BRD1"/>
<dbReference type="KEGG" id="apj:APJL_1564"/>
<dbReference type="HOGENOM" id="CLU_049382_4_1_6"/>
<dbReference type="Proteomes" id="UP000008547">
    <property type="component" value="Chromosome"/>
</dbReference>
<dbReference type="GO" id="GO:0005829">
    <property type="term" value="C:cytosol"/>
    <property type="evidence" value="ECO:0007669"/>
    <property type="project" value="TreeGrafter"/>
</dbReference>
<dbReference type="GO" id="GO:0016279">
    <property type="term" value="F:protein-lysine N-methyltransferase activity"/>
    <property type="evidence" value="ECO:0007669"/>
    <property type="project" value="TreeGrafter"/>
</dbReference>
<dbReference type="GO" id="GO:0032259">
    <property type="term" value="P:methylation"/>
    <property type="evidence" value="ECO:0007669"/>
    <property type="project" value="UniProtKB-KW"/>
</dbReference>
<dbReference type="CDD" id="cd02440">
    <property type="entry name" value="AdoMet_MTases"/>
    <property type="match status" value="1"/>
</dbReference>
<dbReference type="Gene3D" id="3.40.50.150">
    <property type="entry name" value="Vaccinia Virus protein VP39"/>
    <property type="match status" value="1"/>
</dbReference>
<dbReference type="HAMAP" id="MF_00735">
    <property type="entry name" value="Methyltr_PrmA"/>
    <property type="match status" value="1"/>
</dbReference>
<dbReference type="InterPro" id="IPR050078">
    <property type="entry name" value="Ribosomal_L11_MeTrfase_PrmA"/>
</dbReference>
<dbReference type="InterPro" id="IPR004498">
    <property type="entry name" value="Ribosomal_PrmA_MeTrfase"/>
</dbReference>
<dbReference type="InterPro" id="IPR029063">
    <property type="entry name" value="SAM-dependent_MTases_sf"/>
</dbReference>
<dbReference type="NCBIfam" id="TIGR00406">
    <property type="entry name" value="prmA"/>
    <property type="match status" value="1"/>
</dbReference>
<dbReference type="PANTHER" id="PTHR43648">
    <property type="entry name" value="ELECTRON TRANSFER FLAVOPROTEIN BETA SUBUNIT LYSINE METHYLTRANSFERASE"/>
    <property type="match status" value="1"/>
</dbReference>
<dbReference type="PANTHER" id="PTHR43648:SF1">
    <property type="entry name" value="ELECTRON TRANSFER FLAVOPROTEIN BETA SUBUNIT LYSINE METHYLTRANSFERASE"/>
    <property type="match status" value="1"/>
</dbReference>
<dbReference type="Pfam" id="PF06325">
    <property type="entry name" value="PrmA"/>
    <property type="match status" value="1"/>
</dbReference>
<dbReference type="PIRSF" id="PIRSF000401">
    <property type="entry name" value="RPL11_MTase"/>
    <property type="match status" value="1"/>
</dbReference>
<dbReference type="SUPFAM" id="SSF53335">
    <property type="entry name" value="S-adenosyl-L-methionine-dependent methyltransferases"/>
    <property type="match status" value="1"/>
</dbReference>
<proteinExistence type="inferred from homology"/>
<comment type="function">
    <text evidence="1">Methylates ribosomal protein L11.</text>
</comment>
<comment type="catalytic activity">
    <reaction evidence="1">
        <text>L-lysyl-[protein] + 3 S-adenosyl-L-methionine = N(6),N(6),N(6)-trimethyl-L-lysyl-[protein] + 3 S-adenosyl-L-homocysteine + 3 H(+)</text>
        <dbReference type="Rhea" id="RHEA:54192"/>
        <dbReference type="Rhea" id="RHEA-COMP:9752"/>
        <dbReference type="Rhea" id="RHEA-COMP:13826"/>
        <dbReference type="ChEBI" id="CHEBI:15378"/>
        <dbReference type="ChEBI" id="CHEBI:29969"/>
        <dbReference type="ChEBI" id="CHEBI:57856"/>
        <dbReference type="ChEBI" id="CHEBI:59789"/>
        <dbReference type="ChEBI" id="CHEBI:61961"/>
    </reaction>
</comment>
<comment type="subcellular location">
    <subcellularLocation>
        <location evidence="1">Cytoplasm</location>
    </subcellularLocation>
</comment>
<comment type="similarity">
    <text evidence="1">Belongs to the methyltransferase superfamily. PrmA family.</text>
</comment>
<evidence type="ECO:0000255" key="1">
    <source>
        <dbReference type="HAMAP-Rule" id="MF_00735"/>
    </source>
</evidence>
<protein>
    <recommendedName>
        <fullName evidence="1">Ribosomal protein L11 methyltransferase</fullName>
        <shortName evidence="1">L11 Mtase</shortName>
        <ecNumber evidence="1">2.1.1.-</ecNumber>
    </recommendedName>
</protein>
<sequence>MAWVQIRLNSTDKQAEQISDFLEEIGAVSVTFMDSQDTPIFEPLPGETRLWGNTDVVGLFDAETDMKAIVEALIASRLVEADFAHKIEQIEDKDWEREWMDNFHPMQFGKRLWICPSWREVPDSNAVNVMLDPGLAFGTGTHPTTALCLQWLDSLDLTGKTVIDFGCGSGILAIAALKLGAKQAIGIDIDPQAILASGNNAEANGVADRLQLFLAKDQPQDLQADVVVANILAGPLKELAPNIITLVKPQGDLGLSGILATQAESVCEAYAPDFNLDSVVEKEEWCRITGVKK</sequence>